<protein>
    <recommendedName>
        <fullName evidence="8">Transcription factor MYB56</fullName>
    </recommendedName>
    <alternativeName>
        <fullName evidence="8">Myb-related protein 56</fullName>
        <shortName evidence="8">AtMYB56</shortName>
    </alternativeName>
    <alternativeName>
        <fullName evidence="7">Protein BRASSINOSTEROIDS AT VASCULAR AND ORGANIZING CENTER</fullName>
    </alternativeName>
</protein>
<accession>Q6R053</accession>
<accession>Q9FN72</accession>
<accession>Q9ZTD6</accession>
<comment type="function">
    <text evidence="4 5 6">Acts as a cell-specific local repressor of quiescent center (QC) self-renewal by cell divisions in the primary root. Counteracts brassinosteroid (BR)-mediated cell division in the QC cells (PubMed:24981610). Regulates maternally seed size, especially before the heart stage, promoting both endothelial cells expansion and cell number in the outer integument layer of the seed coat (PubMed:23911125). Modulates the expression of genes involved in cell wall metabolism such as cell division and expansion (PubMed:23911125, PubMed:24981610). Negative regulator of flowering via the repression of FT transcription (PubMed:25343985).</text>
</comment>
<comment type="subunit">
    <text evidence="5 6">Forms homodimer (PubMed:25343985). Interacts with the dephosphorylated active form of BES1 in the nucleus of quiescent center (QC) cells (PubMed:24981610). Interacts with BPM1, BPM2, BPM3, BPM4, BPM5 and BPM6 at the promoter of FLOWERING LOCUS T (FT) (PubMed:25343985).</text>
</comment>
<comment type="subcellular location">
    <subcellularLocation>
        <location evidence="1 5 6">Nucleus</location>
    </subcellularLocation>
    <subcellularLocation>
        <location evidence="6">Cytoplasm</location>
        <location evidence="6">Cytosol</location>
    </subcellularLocation>
</comment>
<comment type="tissue specificity">
    <text evidence="3 4 5 6">Mostly expressed in flowers (at protein level) and siliques, and, to a lower extent, in roots, stems and leaves (PubMed:25343985). Expressed in embryos (e.g. heart and torpedo stages) and cotyledons, and, at low levels, in roots and inflorescence (PubMed:23911125). Accumulates specifically in root apical meristem quiescent center (QC) and vascular initial cells (PubMed:16581911, PubMed:24981610).</text>
</comment>
<comment type="developmental stage">
    <text evidence="4">Expressed in developing seeds.</text>
</comment>
<comment type="induction">
    <text evidence="5 6">Levels follow a circadian cycle with a progressive decrease during the day time (at protein level) (PubMed:25343985). Down-regulated by brassinosteroids (BRs) in a dose- and time-dependent manner. Repressed by BES1. Auto-activation of expression (PubMed:24981610). Targeted to 26S proteasomal degradation by the CULLIN3 (CUL3)-based E3 ligases CRL3(BPMs) (PubMed:25343985).</text>
</comment>
<comment type="disruption phenotype">
    <text evidence="4 5 6">Smaller seeds and embryos associated with smaller contracted endothelial cells and reduced cell number in the outer integument layer of the seed coat during the seed development (PubMed:23911125). Increased quiescent center (QC) cell divisions (PubMed:24981610). Early flowering under long-day (LD) associated with FT accumulation (PubMed:25343985).</text>
</comment>
<comment type="sequence caution" evidence="9">
    <conflict type="erroneous initiation">
        <sequence resource="EMBL-CDS" id="BAB09579"/>
    </conflict>
    <text>Truncated N-terminus.</text>
</comment>
<proteinExistence type="evidence at protein level"/>
<name>MYB56_ARATH</name>
<sequence>MNPNLLEKDLRGKETTNGSIRYKEANNFRSLPNSHTAACKTSLNNPSISRNHPHNKSASVLESEDEHGNERGENEKSLRMRGKSGINTKVCSRGHWRPTEDAKLKELVAQFGPQNWNLISNHLLGRSGKSCRLRWFNQLDPRINKRAFTEEEEFRLLAAHRAYGNKWALISRLFPGRTDNAVKNHWHVIMARRTRESQRQRQQPPPTLSRDAEMTVSSSCRYNQGKFINEEDDDDDVSAVSTCTTELSLTPPSSAYQPRFFNYDSTLASGKDGQCVQRAEVNGIYGKKMDHQNHHTISVSERKVEMKMRSGYYYFDFLGVGAS</sequence>
<reference key="1">
    <citation type="submission" date="2004-01" db="EMBL/GenBank/DDBJ databases">
        <title>The MYB transcription factor family in Arabidopsis: A genome-wide cloning and expression pattern analysis.</title>
        <authorList>
            <person name="Qu L."/>
            <person name="Gu H."/>
        </authorList>
    </citation>
    <scope>NUCLEOTIDE SEQUENCE [MRNA]</scope>
</reference>
<reference key="2">
    <citation type="journal article" date="1997" name="DNA Res.">
        <title>Structural analysis of Arabidopsis thaliana chromosome 5. II. Sequence features of the regions of 1,044,062 bp covered by thirteen physically assigned P1 clones.</title>
        <authorList>
            <person name="Kotani H."/>
            <person name="Nakamura Y."/>
            <person name="Sato S."/>
            <person name="Kaneko T."/>
            <person name="Asamizu E."/>
            <person name="Miyajima N."/>
            <person name="Tabata S."/>
        </authorList>
    </citation>
    <scope>NUCLEOTIDE SEQUENCE [LARGE SCALE GENOMIC DNA]</scope>
    <source>
        <strain>cv. Columbia</strain>
    </source>
</reference>
<reference key="3">
    <citation type="journal article" date="2017" name="Plant J.">
        <title>Araport11: a complete reannotation of the Arabidopsis thaliana reference genome.</title>
        <authorList>
            <person name="Cheng C.Y."/>
            <person name="Krishnakumar V."/>
            <person name="Chan A.P."/>
            <person name="Thibaud-Nissen F."/>
            <person name="Schobel S."/>
            <person name="Town C.D."/>
        </authorList>
    </citation>
    <scope>GENOME REANNOTATION</scope>
    <source>
        <strain>cv. Columbia</strain>
    </source>
</reference>
<reference key="4">
    <citation type="submission" date="2004-09" db="EMBL/GenBank/DDBJ databases">
        <title>Large-scale analysis of RIKEN Arabidopsis full-length (RAFL) cDNAs.</title>
        <authorList>
            <person name="Totoki Y."/>
            <person name="Seki M."/>
            <person name="Ishida J."/>
            <person name="Nakajima M."/>
            <person name="Enju A."/>
            <person name="Kamiya A."/>
            <person name="Narusaka M."/>
            <person name="Shin-i T."/>
            <person name="Nakagawa M."/>
            <person name="Sakamoto N."/>
            <person name="Oishi K."/>
            <person name="Kohara Y."/>
            <person name="Kobayashi M."/>
            <person name="Toyoda A."/>
            <person name="Sakaki Y."/>
            <person name="Sakurai T."/>
            <person name="Iida K."/>
            <person name="Akiyama K."/>
            <person name="Satou M."/>
            <person name="Toyoda T."/>
            <person name="Konagaya A."/>
            <person name="Carninci P."/>
            <person name="Kawai J."/>
            <person name="Hayashizaki Y."/>
            <person name="Shinozaki K."/>
        </authorList>
    </citation>
    <scope>NUCLEOTIDE SEQUENCE [LARGE SCALE MRNA]</scope>
    <source>
        <strain>cv. Columbia</strain>
    </source>
</reference>
<reference key="5">
    <citation type="journal article" date="1998" name="Plant J.">
        <title>Towards functional characterisation of the members of the R2R3-MYB gene family from Arabidopsis thaliana.</title>
        <authorList>
            <person name="Kranz H.D."/>
            <person name="Denekamp M."/>
            <person name="Greco R."/>
            <person name="Jin H.-L."/>
            <person name="Leyva A."/>
            <person name="Meissner R.C."/>
            <person name="Petroni K."/>
            <person name="Urzainqui A."/>
            <person name="Bevan M."/>
            <person name="Martin C."/>
            <person name="Smeekens S."/>
            <person name="Tonelli C."/>
            <person name="Paz-Ares J."/>
            <person name="Weisshaar B."/>
        </authorList>
    </citation>
    <scope>NUCLEOTIDE SEQUENCE [MRNA] OF 143-323</scope>
    <scope>GENE FAMILY</scope>
    <scope>NOMENCLATURE</scope>
    <source>
        <strain>cv. Columbia</strain>
    </source>
</reference>
<reference key="6">
    <citation type="journal article" date="2006" name="Plant Mol. Biol.">
        <title>The MYB transcription factor superfamily of Arabidopsis: expression analysis and phylogenetic comparison with the rice MYB family.</title>
        <authorList>
            <person name="Chen Y."/>
            <person name="Yang X."/>
            <person name="He K."/>
            <person name="Liu M."/>
            <person name="Li J."/>
            <person name="Gao Z."/>
            <person name="Lin Z."/>
            <person name="Zhang Y."/>
            <person name="Wang X."/>
            <person name="Qiu X."/>
            <person name="Shen Y."/>
            <person name="Zhang L."/>
            <person name="Deng X."/>
            <person name="Luo J."/>
            <person name="Deng X.-W."/>
            <person name="Chen Z."/>
            <person name="Gu H."/>
            <person name="Qu L.-J."/>
        </authorList>
    </citation>
    <scope>GENE FAMILY</scope>
</reference>
<reference key="7">
    <citation type="journal article" date="2006" name="Proc. Natl. Acad. Sci. U.S.A.">
        <title>Transcriptional and posttranscriptional regulation of transcription factor expression in Arabidopsis roots.</title>
        <authorList>
            <person name="Lee J.-Y."/>
            <person name="Colinas J."/>
            <person name="Wang J.Y."/>
            <person name="Mace D."/>
            <person name="Ohler U."/>
            <person name="Benfey P.N."/>
        </authorList>
    </citation>
    <scope>TISSUE SPECIFICITY</scope>
</reference>
<reference key="8">
    <citation type="journal article" date="2013" name="J. Integr. Plant Biol.">
        <title>MYB56 encoding a R2R3 MYB transcription factor regulates seed size in Arabidopsis thaliana.</title>
        <authorList>
            <person name="Zhang Y."/>
            <person name="Liang W."/>
            <person name="Shi J."/>
            <person name="Xu J."/>
            <person name="Zhang D."/>
        </authorList>
    </citation>
    <scope>FUNCTION</scope>
    <scope>DISRUPTION PHENOTYPE</scope>
    <scope>DEVELOPMENTAL STAGE</scope>
    <scope>TISSUE SPECIFICITY</scope>
    <source>
        <strain>cv. Columbia</strain>
    </source>
</reference>
<reference key="9">
    <citation type="journal article" date="2014" name="Dev. Cell">
        <title>Regulation of plant stem cell quiescence by a brassinosteroid signaling module.</title>
        <authorList>
            <person name="Vilarrasa-Blasi J."/>
            <person name="Gonzalez-Garcia M.P."/>
            <person name="Frigola D."/>
            <person name="Fabregas N."/>
            <person name="Alexiou K.G."/>
            <person name="Lopez-Bigas N."/>
            <person name="Rivas S."/>
            <person name="Jauneau A."/>
            <person name="Lohmann J.U."/>
            <person name="Benfey P.N."/>
            <person name="Ibanes M."/>
            <person name="Cano-Delgado A.I."/>
        </authorList>
    </citation>
    <scope>FUNCTION</scope>
    <scope>DISRUPTION PHENOTYPE</scope>
    <scope>SUBCELLULAR LOCATION</scope>
    <scope>INTERACTION WITH BES1</scope>
    <scope>REPRESSION BY BES1</scope>
    <scope>TISSUE SPECIFICITY</scope>
    <source>
        <strain>cv. Columbia</strain>
    </source>
</reference>
<reference key="10">
    <citation type="journal article" date="2014" name="Mol. Plant">
        <title>Identification of Arabidopsis MYB56 as a novel substrate for CRL3BPM E3 ligases.</title>
        <authorList>
            <person name="Chen L."/>
            <person name="Bernhardt A."/>
            <person name="Lee J."/>
            <person name="Hellmann H."/>
        </authorList>
    </citation>
    <scope>FUNCTION</scope>
    <scope>DISRUPTION PHENOTYPE</scope>
    <scope>REGULATION BY CRL3(BPMS)</scope>
    <scope>INDUCTION</scope>
    <scope>INTERACTION WITH BPM1; BPM2; BPM3; BPM4; BPM5 AND BPM6</scope>
    <scope>HOMODIMERIZATION</scope>
    <scope>TISSUE SPECIFICITY</scope>
    <scope>SUBCELLULAR LOCATION</scope>
    <source>
        <strain>cv. Columbia</strain>
    </source>
</reference>
<feature type="chain" id="PRO_0000438812" description="Transcription factor MYB56">
    <location>
        <begin position="1"/>
        <end position="323"/>
    </location>
</feature>
<feature type="domain" description="HTH myb-type 1" evidence="1">
    <location>
        <begin position="88"/>
        <end position="139"/>
    </location>
</feature>
<feature type="domain" description="HTH myb-type 2" evidence="1">
    <location>
        <begin position="140"/>
        <end position="194"/>
    </location>
</feature>
<feature type="DNA-binding region" description="H-T-H motif" evidence="1">
    <location>
        <begin position="116"/>
        <end position="138"/>
    </location>
</feature>
<feature type="DNA-binding region" description="H-T-H motif" evidence="1">
    <location>
        <begin position="167"/>
        <end position="190"/>
    </location>
</feature>
<feature type="region of interest" description="Disordered" evidence="2">
    <location>
        <begin position="1"/>
        <end position="84"/>
    </location>
</feature>
<feature type="region of interest" description="Disordered" evidence="2">
    <location>
        <begin position="192"/>
        <end position="217"/>
    </location>
</feature>
<feature type="compositionally biased region" description="Basic and acidic residues" evidence="2">
    <location>
        <begin position="1"/>
        <end position="14"/>
    </location>
</feature>
<feature type="compositionally biased region" description="Polar residues" evidence="2">
    <location>
        <begin position="27"/>
        <end position="60"/>
    </location>
</feature>
<feature type="compositionally biased region" description="Basic and acidic residues" evidence="2">
    <location>
        <begin position="66"/>
        <end position="78"/>
    </location>
</feature>
<feature type="sequence conflict" description="In Ref. 5; AAC83613." evidence="9" ref="5">
    <original>W</original>
    <variation>R</variation>
    <location>
        <position position="186"/>
    </location>
</feature>
<feature type="sequence conflict" description="In Ref. 5; AAC83613." evidence="9" ref="5">
    <original>A</original>
    <variation>T</variation>
    <location>
        <position position="279"/>
    </location>
</feature>
<feature type="sequence conflict" description="In Ref. 5; AAC83613." evidence="9" ref="5">
    <original>M</original>
    <variation>T</variation>
    <location>
        <position position="308"/>
    </location>
</feature>
<keyword id="KW-1070">Brassinosteroid signaling pathway</keyword>
<keyword id="KW-0963">Cytoplasm</keyword>
<keyword id="KW-0238">DNA-binding</keyword>
<keyword id="KW-0539">Nucleus</keyword>
<keyword id="KW-1185">Reference proteome</keyword>
<keyword id="KW-0677">Repeat</keyword>
<keyword id="KW-0804">Transcription</keyword>
<keyword id="KW-0805">Transcription regulation</keyword>
<gene>
    <name evidence="8" type="primary">MYB56</name>
    <name evidence="7" type="synonym">BRAVO</name>
    <name evidence="10" type="ordered locus">At5g17800</name>
    <name evidence="11" type="ORF">MVA3.16</name>
</gene>
<dbReference type="EMBL" id="AY519627">
    <property type="protein sequence ID" value="AAS10097.1"/>
    <property type="molecule type" value="mRNA"/>
</dbReference>
<dbReference type="EMBL" id="AB006706">
    <property type="protein sequence ID" value="BAB09579.1"/>
    <property type="status" value="ALT_INIT"/>
    <property type="molecule type" value="Genomic_DNA"/>
</dbReference>
<dbReference type="EMBL" id="CP002688">
    <property type="protein sequence ID" value="AED92471.1"/>
    <property type="molecule type" value="Genomic_DNA"/>
</dbReference>
<dbReference type="EMBL" id="AK176193">
    <property type="protein sequence ID" value="BAD43956.1"/>
    <property type="molecule type" value="mRNA"/>
</dbReference>
<dbReference type="EMBL" id="AK176277">
    <property type="protein sequence ID" value="BAD44040.1"/>
    <property type="molecule type" value="mRNA"/>
</dbReference>
<dbReference type="EMBL" id="AF062891">
    <property type="protein sequence ID" value="AAC83613.1"/>
    <property type="molecule type" value="mRNA"/>
</dbReference>
<dbReference type="PIR" id="T51663">
    <property type="entry name" value="T51663"/>
</dbReference>
<dbReference type="RefSeq" id="NP_197282.1">
    <property type="nucleotide sequence ID" value="NM_121786.4"/>
</dbReference>
<dbReference type="SMR" id="Q6R053"/>
<dbReference type="FunCoup" id="Q6R053">
    <property type="interactions" value="13"/>
</dbReference>
<dbReference type="IntAct" id="Q6R053">
    <property type="interactions" value="62"/>
</dbReference>
<dbReference type="STRING" id="3702.Q6R053"/>
<dbReference type="PaxDb" id="3702-AT5G17800.1"/>
<dbReference type="EnsemblPlants" id="AT5G17800.1">
    <property type="protein sequence ID" value="AT5G17800.1"/>
    <property type="gene ID" value="AT5G17800"/>
</dbReference>
<dbReference type="GeneID" id="831648"/>
<dbReference type="Gramene" id="AT5G17800.1">
    <property type="protein sequence ID" value="AT5G17800.1"/>
    <property type="gene ID" value="AT5G17800"/>
</dbReference>
<dbReference type="KEGG" id="ath:AT5G17800"/>
<dbReference type="Araport" id="AT5G17800"/>
<dbReference type="TAIR" id="AT5G17800">
    <property type="gene designation" value="MYB56"/>
</dbReference>
<dbReference type="eggNOG" id="KOG0048">
    <property type="taxonomic scope" value="Eukaryota"/>
</dbReference>
<dbReference type="HOGENOM" id="CLU_028567_18_1_1"/>
<dbReference type="InParanoid" id="Q6R053"/>
<dbReference type="OMA" id="WNLISNH"/>
<dbReference type="PhylomeDB" id="Q6R053"/>
<dbReference type="PRO" id="PR:Q6R053"/>
<dbReference type="Proteomes" id="UP000006548">
    <property type="component" value="Chromosome 5"/>
</dbReference>
<dbReference type="ExpressionAtlas" id="Q6R053">
    <property type="expression patterns" value="baseline and differential"/>
</dbReference>
<dbReference type="GO" id="GO:0005829">
    <property type="term" value="C:cytosol"/>
    <property type="evidence" value="ECO:0000314"/>
    <property type="project" value="UniProtKB"/>
</dbReference>
<dbReference type="GO" id="GO:0005634">
    <property type="term" value="C:nucleus"/>
    <property type="evidence" value="ECO:0000314"/>
    <property type="project" value="UniProtKB"/>
</dbReference>
<dbReference type="GO" id="GO:0003700">
    <property type="term" value="F:DNA-binding transcription factor activity"/>
    <property type="evidence" value="ECO:0000314"/>
    <property type="project" value="UniProtKB"/>
</dbReference>
<dbReference type="GO" id="GO:0042803">
    <property type="term" value="F:protein homodimerization activity"/>
    <property type="evidence" value="ECO:0000314"/>
    <property type="project" value="UniProtKB"/>
</dbReference>
<dbReference type="GO" id="GO:0000978">
    <property type="term" value="F:RNA polymerase II cis-regulatory region sequence-specific DNA binding"/>
    <property type="evidence" value="ECO:0000314"/>
    <property type="project" value="TAIR"/>
</dbReference>
<dbReference type="GO" id="GO:0000976">
    <property type="term" value="F:transcription cis-regulatory region binding"/>
    <property type="evidence" value="ECO:0000353"/>
    <property type="project" value="TAIR"/>
</dbReference>
<dbReference type="GO" id="GO:0009742">
    <property type="term" value="P:brassinosteroid mediated signaling pathway"/>
    <property type="evidence" value="ECO:0007669"/>
    <property type="project" value="UniProtKB-KW"/>
</dbReference>
<dbReference type="GO" id="GO:0071367">
    <property type="term" value="P:cellular response to brassinosteroid stimulus"/>
    <property type="evidence" value="ECO:0000270"/>
    <property type="project" value="TAIR"/>
</dbReference>
<dbReference type="GO" id="GO:0001935">
    <property type="term" value="P:endothelial cell proliferation"/>
    <property type="evidence" value="ECO:0000315"/>
    <property type="project" value="UniProtKB"/>
</dbReference>
<dbReference type="GO" id="GO:0080060">
    <property type="term" value="P:integument development"/>
    <property type="evidence" value="ECO:0000315"/>
    <property type="project" value="UniProtKB"/>
</dbReference>
<dbReference type="GO" id="GO:0051782">
    <property type="term" value="P:negative regulation of cell division"/>
    <property type="evidence" value="ECO:0000315"/>
    <property type="project" value="TAIR"/>
</dbReference>
<dbReference type="GO" id="GO:0048579">
    <property type="term" value="P:negative regulation of long-day photoperiodism, flowering"/>
    <property type="evidence" value="ECO:0000315"/>
    <property type="project" value="UniProtKB"/>
</dbReference>
<dbReference type="GO" id="GO:0045893">
    <property type="term" value="P:positive regulation of DNA-templated transcription"/>
    <property type="evidence" value="ECO:0000314"/>
    <property type="project" value="TAIR"/>
</dbReference>
<dbReference type="GO" id="GO:1904961">
    <property type="term" value="P:quiescent center organization"/>
    <property type="evidence" value="ECO:0000315"/>
    <property type="project" value="UniProtKB"/>
</dbReference>
<dbReference type="GO" id="GO:0006355">
    <property type="term" value="P:regulation of DNA-templated transcription"/>
    <property type="evidence" value="ECO:0000304"/>
    <property type="project" value="TAIR"/>
</dbReference>
<dbReference type="GO" id="GO:0080113">
    <property type="term" value="P:regulation of seed growth"/>
    <property type="evidence" value="ECO:0000315"/>
    <property type="project" value="UniProtKB"/>
</dbReference>
<dbReference type="CDD" id="cd00167">
    <property type="entry name" value="SANT"/>
    <property type="match status" value="2"/>
</dbReference>
<dbReference type="FunFam" id="1.10.10.60:FF:000060">
    <property type="entry name" value="MYB transcription factor"/>
    <property type="match status" value="1"/>
</dbReference>
<dbReference type="FunFam" id="1.10.10.60:FF:000356">
    <property type="entry name" value="MYB transcription factor"/>
    <property type="match status" value="1"/>
</dbReference>
<dbReference type="Gene3D" id="1.10.10.60">
    <property type="entry name" value="Homeodomain-like"/>
    <property type="match status" value="2"/>
</dbReference>
<dbReference type="InterPro" id="IPR009057">
    <property type="entry name" value="Homeodomain-like_sf"/>
</dbReference>
<dbReference type="InterPro" id="IPR017930">
    <property type="entry name" value="Myb_dom"/>
</dbReference>
<dbReference type="InterPro" id="IPR050560">
    <property type="entry name" value="MYB_TF"/>
</dbReference>
<dbReference type="InterPro" id="IPR001005">
    <property type="entry name" value="SANT/Myb"/>
</dbReference>
<dbReference type="PANTHER" id="PTHR45614:SF259">
    <property type="entry name" value="MYB DOMAIN PROTEIN 89-RELATED"/>
    <property type="match status" value="1"/>
</dbReference>
<dbReference type="PANTHER" id="PTHR45614">
    <property type="entry name" value="MYB PROTEIN-RELATED"/>
    <property type="match status" value="1"/>
</dbReference>
<dbReference type="Pfam" id="PF13921">
    <property type="entry name" value="Myb_DNA-bind_6"/>
    <property type="match status" value="1"/>
</dbReference>
<dbReference type="SMART" id="SM00717">
    <property type="entry name" value="SANT"/>
    <property type="match status" value="2"/>
</dbReference>
<dbReference type="SUPFAM" id="SSF46689">
    <property type="entry name" value="Homeodomain-like"/>
    <property type="match status" value="1"/>
</dbReference>
<dbReference type="PROSITE" id="PS51294">
    <property type="entry name" value="HTH_MYB"/>
    <property type="match status" value="2"/>
</dbReference>
<evidence type="ECO:0000255" key="1">
    <source>
        <dbReference type="PROSITE-ProRule" id="PRU00625"/>
    </source>
</evidence>
<evidence type="ECO:0000256" key="2">
    <source>
        <dbReference type="SAM" id="MobiDB-lite"/>
    </source>
</evidence>
<evidence type="ECO:0000269" key="3">
    <source>
    </source>
</evidence>
<evidence type="ECO:0000269" key="4">
    <source>
    </source>
</evidence>
<evidence type="ECO:0000269" key="5">
    <source>
    </source>
</evidence>
<evidence type="ECO:0000269" key="6">
    <source>
    </source>
</evidence>
<evidence type="ECO:0000303" key="7">
    <source>
    </source>
</evidence>
<evidence type="ECO:0000303" key="8">
    <source>
    </source>
</evidence>
<evidence type="ECO:0000305" key="9"/>
<evidence type="ECO:0000312" key="10">
    <source>
        <dbReference type="Araport" id="AT5G17800"/>
    </source>
</evidence>
<evidence type="ECO:0000312" key="11">
    <source>
        <dbReference type="EMBL" id="BAB09579.1"/>
    </source>
</evidence>
<organism>
    <name type="scientific">Arabidopsis thaliana</name>
    <name type="common">Mouse-ear cress</name>
    <dbReference type="NCBI Taxonomy" id="3702"/>
    <lineage>
        <taxon>Eukaryota</taxon>
        <taxon>Viridiplantae</taxon>
        <taxon>Streptophyta</taxon>
        <taxon>Embryophyta</taxon>
        <taxon>Tracheophyta</taxon>
        <taxon>Spermatophyta</taxon>
        <taxon>Magnoliopsida</taxon>
        <taxon>eudicotyledons</taxon>
        <taxon>Gunneridae</taxon>
        <taxon>Pentapetalae</taxon>
        <taxon>rosids</taxon>
        <taxon>malvids</taxon>
        <taxon>Brassicales</taxon>
        <taxon>Brassicaceae</taxon>
        <taxon>Camelineae</taxon>
        <taxon>Arabidopsis</taxon>
    </lineage>
</organism>